<name>FOLD_PSEA6</name>
<gene>
    <name evidence="1" type="primary">folD</name>
    <name type="ordered locus">Patl_3139</name>
</gene>
<evidence type="ECO:0000255" key="1">
    <source>
        <dbReference type="HAMAP-Rule" id="MF_01576"/>
    </source>
</evidence>
<accession>Q15R43</accession>
<dbReference type="EC" id="1.5.1.5" evidence="1"/>
<dbReference type="EC" id="3.5.4.9" evidence="1"/>
<dbReference type="EMBL" id="CP000388">
    <property type="protein sequence ID" value="ABG41645.1"/>
    <property type="molecule type" value="Genomic_DNA"/>
</dbReference>
<dbReference type="RefSeq" id="WP_011575880.1">
    <property type="nucleotide sequence ID" value="NC_008228.1"/>
</dbReference>
<dbReference type="SMR" id="Q15R43"/>
<dbReference type="STRING" id="342610.Patl_3139"/>
<dbReference type="KEGG" id="pat:Patl_3139"/>
<dbReference type="eggNOG" id="COG0190">
    <property type="taxonomic scope" value="Bacteria"/>
</dbReference>
<dbReference type="HOGENOM" id="CLU_034045_2_1_6"/>
<dbReference type="OrthoDB" id="9803580at2"/>
<dbReference type="UniPathway" id="UPA00193"/>
<dbReference type="Proteomes" id="UP000001981">
    <property type="component" value="Chromosome"/>
</dbReference>
<dbReference type="GO" id="GO:0005829">
    <property type="term" value="C:cytosol"/>
    <property type="evidence" value="ECO:0007669"/>
    <property type="project" value="TreeGrafter"/>
</dbReference>
<dbReference type="GO" id="GO:0004477">
    <property type="term" value="F:methenyltetrahydrofolate cyclohydrolase activity"/>
    <property type="evidence" value="ECO:0007669"/>
    <property type="project" value="UniProtKB-UniRule"/>
</dbReference>
<dbReference type="GO" id="GO:0004488">
    <property type="term" value="F:methylenetetrahydrofolate dehydrogenase (NADP+) activity"/>
    <property type="evidence" value="ECO:0007669"/>
    <property type="project" value="UniProtKB-UniRule"/>
</dbReference>
<dbReference type="GO" id="GO:0000105">
    <property type="term" value="P:L-histidine biosynthetic process"/>
    <property type="evidence" value="ECO:0007669"/>
    <property type="project" value="UniProtKB-KW"/>
</dbReference>
<dbReference type="GO" id="GO:0009086">
    <property type="term" value="P:methionine biosynthetic process"/>
    <property type="evidence" value="ECO:0007669"/>
    <property type="project" value="UniProtKB-KW"/>
</dbReference>
<dbReference type="GO" id="GO:0006164">
    <property type="term" value="P:purine nucleotide biosynthetic process"/>
    <property type="evidence" value="ECO:0007669"/>
    <property type="project" value="UniProtKB-KW"/>
</dbReference>
<dbReference type="GO" id="GO:0035999">
    <property type="term" value="P:tetrahydrofolate interconversion"/>
    <property type="evidence" value="ECO:0007669"/>
    <property type="project" value="UniProtKB-UniRule"/>
</dbReference>
<dbReference type="CDD" id="cd01080">
    <property type="entry name" value="NAD_bind_m-THF_DH_Cyclohyd"/>
    <property type="match status" value="1"/>
</dbReference>
<dbReference type="FunFam" id="3.40.50.10860:FF:000001">
    <property type="entry name" value="Bifunctional protein FolD"/>
    <property type="match status" value="1"/>
</dbReference>
<dbReference type="FunFam" id="3.40.50.720:FF:000006">
    <property type="entry name" value="Bifunctional protein FolD"/>
    <property type="match status" value="1"/>
</dbReference>
<dbReference type="Gene3D" id="3.40.50.10860">
    <property type="entry name" value="Leucine Dehydrogenase, chain A, domain 1"/>
    <property type="match status" value="1"/>
</dbReference>
<dbReference type="Gene3D" id="3.40.50.720">
    <property type="entry name" value="NAD(P)-binding Rossmann-like Domain"/>
    <property type="match status" value="1"/>
</dbReference>
<dbReference type="HAMAP" id="MF_01576">
    <property type="entry name" value="THF_DHG_CYH"/>
    <property type="match status" value="1"/>
</dbReference>
<dbReference type="InterPro" id="IPR046346">
    <property type="entry name" value="Aminoacid_DH-like_N_sf"/>
</dbReference>
<dbReference type="InterPro" id="IPR036291">
    <property type="entry name" value="NAD(P)-bd_dom_sf"/>
</dbReference>
<dbReference type="InterPro" id="IPR000672">
    <property type="entry name" value="THF_DH/CycHdrlase"/>
</dbReference>
<dbReference type="InterPro" id="IPR020630">
    <property type="entry name" value="THF_DH/CycHdrlase_cat_dom"/>
</dbReference>
<dbReference type="InterPro" id="IPR020867">
    <property type="entry name" value="THF_DH/CycHdrlase_CS"/>
</dbReference>
<dbReference type="InterPro" id="IPR020631">
    <property type="entry name" value="THF_DH/CycHdrlase_NAD-bd_dom"/>
</dbReference>
<dbReference type="NCBIfam" id="NF008058">
    <property type="entry name" value="PRK10792.1"/>
    <property type="match status" value="1"/>
</dbReference>
<dbReference type="PANTHER" id="PTHR48099:SF5">
    <property type="entry name" value="C-1-TETRAHYDROFOLATE SYNTHASE, CYTOPLASMIC"/>
    <property type="match status" value="1"/>
</dbReference>
<dbReference type="PANTHER" id="PTHR48099">
    <property type="entry name" value="C-1-TETRAHYDROFOLATE SYNTHASE, CYTOPLASMIC-RELATED"/>
    <property type="match status" value="1"/>
</dbReference>
<dbReference type="Pfam" id="PF00763">
    <property type="entry name" value="THF_DHG_CYH"/>
    <property type="match status" value="1"/>
</dbReference>
<dbReference type="Pfam" id="PF02882">
    <property type="entry name" value="THF_DHG_CYH_C"/>
    <property type="match status" value="1"/>
</dbReference>
<dbReference type="PRINTS" id="PR00085">
    <property type="entry name" value="THFDHDRGNASE"/>
</dbReference>
<dbReference type="SUPFAM" id="SSF53223">
    <property type="entry name" value="Aminoacid dehydrogenase-like, N-terminal domain"/>
    <property type="match status" value="1"/>
</dbReference>
<dbReference type="SUPFAM" id="SSF51735">
    <property type="entry name" value="NAD(P)-binding Rossmann-fold domains"/>
    <property type="match status" value="1"/>
</dbReference>
<dbReference type="PROSITE" id="PS00766">
    <property type="entry name" value="THF_DHG_CYH_1"/>
    <property type="match status" value="1"/>
</dbReference>
<dbReference type="PROSITE" id="PS00767">
    <property type="entry name" value="THF_DHG_CYH_2"/>
    <property type="match status" value="1"/>
</dbReference>
<reference key="1">
    <citation type="submission" date="2006-06" db="EMBL/GenBank/DDBJ databases">
        <title>Complete sequence of Pseudoalteromonas atlantica T6c.</title>
        <authorList>
            <consortium name="US DOE Joint Genome Institute"/>
            <person name="Copeland A."/>
            <person name="Lucas S."/>
            <person name="Lapidus A."/>
            <person name="Barry K."/>
            <person name="Detter J.C."/>
            <person name="Glavina del Rio T."/>
            <person name="Hammon N."/>
            <person name="Israni S."/>
            <person name="Dalin E."/>
            <person name="Tice H."/>
            <person name="Pitluck S."/>
            <person name="Saunders E."/>
            <person name="Brettin T."/>
            <person name="Bruce D."/>
            <person name="Han C."/>
            <person name="Tapia R."/>
            <person name="Gilna P."/>
            <person name="Schmutz J."/>
            <person name="Larimer F."/>
            <person name="Land M."/>
            <person name="Hauser L."/>
            <person name="Kyrpides N."/>
            <person name="Kim E."/>
            <person name="Karls A.C."/>
            <person name="Bartlett D."/>
            <person name="Higgins B.P."/>
            <person name="Richardson P."/>
        </authorList>
    </citation>
    <scope>NUCLEOTIDE SEQUENCE [LARGE SCALE GENOMIC DNA]</scope>
    <source>
        <strain>T6c / ATCC BAA-1087</strain>
    </source>
</reference>
<proteinExistence type="inferred from homology"/>
<organism>
    <name type="scientific">Pseudoalteromonas atlantica (strain T6c / ATCC BAA-1087)</name>
    <dbReference type="NCBI Taxonomy" id="3042615"/>
    <lineage>
        <taxon>Bacteria</taxon>
        <taxon>Pseudomonadati</taxon>
        <taxon>Pseudomonadota</taxon>
        <taxon>Gammaproteobacteria</taxon>
        <taxon>Alteromonadales</taxon>
        <taxon>Alteromonadaceae</taxon>
        <taxon>Paraglaciecola</taxon>
    </lineage>
</organism>
<protein>
    <recommendedName>
        <fullName evidence="1">Bifunctional protein FolD</fullName>
    </recommendedName>
    <domain>
        <recommendedName>
            <fullName evidence="1">Methylenetetrahydrofolate dehydrogenase</fullName>
            <ecNumber evidence="1">1.5.1.5</ecNumber>
        </recommendedName>
    </domain>
    <domain>
        <recommendedName>
            <fullName evidence="1">Methenyltetrahydrofolate cyclohydrolase</fullName>
            <ecNumber evidence="1">3.5.4.9</ecNumber>
        </recommendedName>
    </domain>
</protein>
<comment type="function">
    <text evidence="1">Catalyzes the oxidation of 5,10-methylenetetrahydrofolate to 5,10-methenyltetrahydrofolate and then the hydrolysis of 5,10-methenyltetrahydrofolate to 10-formyltetrahydrofolate.</text>
</comment>
<comment type="catalytic activity">
    <reaction evidence="1">
        <text>(6R)-5,10-methylene-5,6,7,8-tetrahydrofolate + NADP(+) = (6R)-5,10-methenyltetrahydrofolate + NADPH</text>
        <dbReference type="Rhea" id="RHEA:22812"/>
        <dbReference type="ChEBI" id="CHEBI:15636"/>
        <dbReference type="ChEBI" id="CHEBI:57455"/>
        <dbReference type="ChEBI" id="CHEBI:57783"/>
        <dbReference type="ChEBI" id="CHEBI:58349"/>
        <dbReference type="EC" id="1.5.1.5"/>
    </reaction>
</comment>
<comment type="catalytic activity">
    <reaction evidence="1">
        <text>(6R)-5,10-methenyltetrahydrofolate + H2O = (6R)-10-formyltetrahydrofolate + H(+)</text>
        <dbReference type="Rhea" id="RHEA:23700"/>
        <dbReference type="ChEBI" id="CHEBI:15377"/>
        <dbReference type="ChEBI" id="CHEBI:15378"/>
        <dbReference type="ChEBI" id="CHEBI:57455"/>
        <dbReference type="ChEBI" id="CHEBI:195366"/>
        <dbReference type="EC" id="3.5.4.9"/>
    </reaction>
</comment>
<comment type="pathway">
    <text evidence="1">One-carbon metabolism; tetrahydrofolate interconversion.</text>
</comment>
<comment type="subunit">
    <text evidence="1">Homodimer.</text>
</comment>
<comment type="similarity">
    <text evidence="1">Belongs to the tetrahydrofolate dehydrogenase/cyclohydrolase family.</text>
</comment>
<keyword id="KW-0028">Amino-acid biosynthesis</keyword>
<keyword id="KW-0368">Histidine biosynthesis</keyword>
<keyword id="KW-0378">Hydrolase</keyword>
<keyword id="KW-0486">Methionine biosynthesis</keyword>
<keyword id="KW-0511">Multifunctional enzyme</keyword>
<keyword id="KW-0521">NADP</keyword>
<keyword id="KW-0554">One-carbon metabolism</keyword>
<keyword id="KW-0560">Oxidoreductase</keyword>
<keyword id="KW-0658">Purine biosynthesis</keyword>
<feature type="chain" id="PRO_0000268441" description="Bifunctional protein FolD">
    <location>
        <begin position="1"/>
        <end position="285"/>
    </location>
</feature>
<feature type="binding site" evidence="1">
    <location>
        <begin position="166"/>
        <end position="168"/>
    </location>
    <ligand>
        <name>NADP(+)</name>
        <dbReference type="ChEBI" id="CHEBI:58349"/>
    </ligand>
</feature>
<feature type="binding site" evidence="1">
    <location>
        <position position="232"/>
    </location>
    <ligand>
        <name>NADP(+)</name>
        <dbReference type="ChEBI" id="CHEBI:58349"/>
    </ligand>
</feature>
<sequence>MPAQKIDGKLIAQQVRQHVKSHVESIVSSGKRPPGLAVVLVGSDAASHVYVTNKRRACEEVGFVSKSYDLPSTTSQQKLLELIDTLNADEEIDGILVQLPLPAGLDKEQVLERILPHKDVDGFHPYNIGRLAQRIPALRPCTPKGIMTLIESTKRPIKGLDAVIVGASNIVGRPMFMELLLAGCTVTSCHKFTKDLQSHVERADLIVVAVGISAFIPGEWIKPGAIVIDVGINRQTDGTLIGDVDYATAEKRAGWITPVPGGVGPMTVASLIENTLEAYVKYHSN</sequence>